<organism>
    <name type="scientific">Yersinia pestis bv. Antiqua (strain Antiqua)</name>
    <dbReference type="NCBI Taxonomy" id="360102"/>
    <lineage>
        <taxon>Bacteria</taxon>
        <taxon>Pseudomonadati</taxon>
        <taxon>Pseudomonadota</taxon>
        <taxon>Gammaproteobacteria</taxon>
        <taxon>Enterobacterales</taxon>
        <taxon>Yersiniaceae</taxon>
        <taxon>Yersinia</taxon>
    </lineage>
</organism>
<keyword id="KW-0067">ATP-binding</keyword>
<keyword id="KW-0963">Cytoplasm</keyword>
<keyword id="KW-0418">Kinase</keyword>
<keyword id="KW-0460">Magnesium</keyword>
<keyword id="KW-0479">Metal-binding</keyword>
<keyword id="KW-0547">Nucleotide-binding</keyword>
<keyword id="KW-0808">Transferase</keyword>
<accession>Q1C6A1</accession>
<protein>
    <recommendedName>
        <fullName evidence="1">Acetate kinase</fullName>
        <ecNumber evidence="1">2.7.2.1</ecNumber>
    </recommendedName>
    <alternativeName>
        <fullName evidence="1">Acetokinase</fullName>
    </alternativeName>
</protein>
<feature type="chain" id="PRO_1000002285" description="Acetate kinase">
    <location>
        <begin position="1"/>
        <end position="400"/>
    </location>
</feature>
<feature type="active site" description="Proton donor/acceptor" evidence="1">
    <location>
        <position position="150"/>
    </location>
</feature>
<feature type="binding site" evidence="1">
    <location>
        <position position="10"/>
    </location>
    <ligand>
        <name>Mg(2+)</name>
        <dbReference type="ChEBI" id="CHEBI:18420"/>
    </ligand>
</feature>
<feature type="binding site" evidence="1">
    <location>
        <position position="17"/>
    </location>
    <ligand>
        <name>ATP</name>
        <dbReference type="ChEBI" id="CHEBI:30616"/>
    </ligand>
</feature>
<feature type="binding site" evidence="1">
    <location>
        <position position="91"/>
    </location>
    <ligand>
        <name>substrate</name>
    </ligand>
</feature>
<feature type="binding site" evidence="1">
    <location>
        <begin position="210"/>
        <end position="214"/>
    </location>
    <ligand>
        <name>ATP</name>
        <dbReference type="ChEBI" id="CHEBI:30616"/>
    </ligand>
</feature>
<feature type="binding site" evidence="1">
    <location>
        <begin position="285"/>
        <end position="287"/>
    </location>
    <ligand>
        <name>ATP</name>
        <dbReference type="ChEBI" id="CHEBI:30616"/>
    </ligand>
</feature>
<feature type="binding site" evidence="1">
    <location>
        <begin position="333"/>
        <end position="337"/>
    </location>
    <ligand>
        <name>ATP</name>
        <dbReference type="ChEBI" id="CHEBI:30616"/>
    </ligand>
</feature>
<feature type="binding site" evidence="1">
    <location>
        <position position="387"/>
    </location>
    <ligand>
        <name>Mg(2+)</name>
        <dbReference type="ChEBI" id="CHEBI:18420"/>
    </ligand>
</feature>
<feature type="site" description="Transition state stabilizer" evidence="1">
    <location>
        <position position="182"/>
    </location>
</feature>
<feature type="site" description="Transition state stabilizer" evidence="1">
    <location>
        <position position="243"/>
    </location>
</feature>
<reference key="1">
    <citation type="journal article" date="2006" name="J. Bacteriol.">
        <title>Complete genome sequence of Yersinia pestis strains Antiqua and Nepal516: evidence of gene reduction in an emerging pathogen.</title>
        <authorList>
            <person name="Chain P.S.G."/>
            <person name="Hu P."/>
            <person name="Malfatti S.A."/>
            <person name="Radnedge L."/>
            <person name="Larimer F."/>
            <person name="Vergez L.M."/>
            <person name="Worsham P."/>
            <person name="Chu M.C."/>
            <person name="Andersen G.L."/>
        </authorList>
    </citation>
    <scope>NUCLEOTIDE SEQUENCE [LARGE SCALE GENOMIC DNA]</scope>
    <source>
        <strain>Antiqua</strain>
    </source>
</reference>
<proteinExistence type="inferred from homology"/>
<gene>
    <name evidence="1" type="primary">ackA</name>
    <name type="ordered locus">YPA_2055</name>
</gene>
<name>ACKA_YERPA</name>
<evidence type="ECO:0000255" key="1">
    <source>
        <dbReference type="HAMAP-Rule" id="MF_00020"/>
    </source>
</evidence>
<sequence>MSSKLVLVLNCGSSSLKFAIIDATNGEEHISGLAECFHLPEARIKWKVDGGKQEAALGAGAAHSEALNFIVNTILAQKPALSAQLTAIGHRIVHGGEKFTSSVIVTEDVIQGIKDSIPFAPLHNPAHLIGIAEALKSFPNLADKNVAVFDTAFHQTMPEESYLYALPYSLYKDHGIRRYGAHGTSHFYVSQEAAKILNKPLEELNVITCHLGNGGSVTAVRNGKCVDTSMGLTPLEGLVMGTRSGDLDPAIIFHLHDAMGMSVDQINTLLTKESGLLGLTEVTSDCRYVEDNYATKADAKRAMDVFCHRLAKYIGSYTALMDGRLDAVVFTGGIGENAAMVRELTLDKLGLLGFEIDHERNMAARFGKSGTITKDSSRLALVIPTNEELVIAQDAARLTA</sequence>
<dbReference type="EC" id="2.7.2.1" evidence="1"/>
<dbReference type="EMBL" id="CP000308">
    <property type="protein sequence ID" value="ABG14021.1"/>
    <property type="molecule type" value="Genomic_DNA"/>
</dbReference>
<dbReference type="RefSeq" id="WP_002210288.1">
    <property type="nucleotide sequence ID" value="NZ_CP009906.1"/>
</dbReference>
<dbReference type="SMR" id="Q1C6A1"/>
<dbReference type="GeneID" id="57976126"/>
<dbReference type="KEGG" id="ypa:YPA_2055"/>
<dbReference type="UniPathway" id="UPA00340">
    <property type="reaction ID" value="UER00458"/>
</dbReference>
<dbReference type="Proteomes" id="UP000001971">
    <property type="component" value="Chromosome"/>
</dbReference>
<dbReference type="GO" id="GO:0005829">
    <property type="term" value="C:cytosol"/>
    <property type="evidence" value="ECO:0007669"/>
    <property type="project" value="TreeGrafter"/>
</dbReference>
<dbReference type="GO" id="GO:0008776">
    <property type="term" value="F:acetate kinase activity"/>
    <property type="evidence" value="ECO:0007669"/>
    <property type="project" value="UniProtKB-UniRule"/>
</dbReference>
<dbReference type="GO" id="GO:0005524">
    <property type="term" value="F:ATP binding"/>
    <property type="evidence" value="ECO:0007669"/>
    <property type="project" value="UniProtKB-KW"/>
</dbReference>
<dbReference type="GO" id="GO:0000287">
    <property type="term" value="F:magnesium ion binding"/>
    <property type="evidence" value="ECO:0007669"/>
    <property type="project" value="UniProtKB-UniRule"/>
</dbReference>
<dbReference type="GO" id="GO:0006083">
    <property type="term" value="P:acetate metabolic process"/>
    <property type="evidence" value="ECO:0007669"/>
    <property type="project" value="TreeGrafter"/>
</dbReference>
<dbReference type="GO" id="GO:0006085">
    <property type="term" value="P:acetyl-CoA biosynthetic process"/>
    <property type="evidence" value="ECO:0007669"/>
    <property type="project" value="UniProtKB-UniRule"/>
</dbReference>
<dbReference type="CDD" id="cd24010">
    <property type="entry name" value="ASKHA_NBD_AcK_PK"/>
    <property type="match status" value="1"/>
</dbReference>
<dbReference type="FunFam" id="3.30.420.40:FF:000041">
    <property type="entry name" value="Acetate kinase"/>
    <property type="match status" value="1"/>
</dbReference>
<dbReference type="FunFam" id="3.30.420.40:FF:000042">
    <property type="entry name" value="Acetate kinase"/>
    <property type="match status" value="1"/>
</dbReference>
<dbReference type="Gene3D" id="3.30.420.40">
    <property type="match status" value="2"/>
</dbReference>
<dbReference type="HAMAP" id="MF_00020">
    <property type="entry name" value="Acetate_kinase"/>
    <property type="match status" value="1"/>
</dbReference>
<dbReference type="InterPro" id="IPR004372">
    <property type="entry name" value="Ac/propionate_kinase"/>
</dbReference>
<dbReference type="InterPro" id="IPR000890">
    <property type="entry name" value="Aliphatic_acid_kin_short-chain"/>
</dbReference>
<dbReference type="InterPro" id="IPR023865">
    <property type="entry name" value="Aliphatic_acid_kinase_CS"/>
</dbReference>
<dbReference type="InterPro" id="IPR043129">
    <property type="entry name" value="ATPase_NBD"/>
</dbReference>
<dbReference type="NCBIfam" id="TIGR00016">
    <property type="entry name" value="ackA"/>
    <property type="match status" value="1"/>
</dbReference>
<dbReference type="PANTHER" id="PTHR21060">
    <property type="entry name" value="ACETATE KINASE"/>
    <property type="match status" value="1"/>
</dbReference>
<dbReference type="PANTHER" id="PTHR21060:SF21">
    <property type="entry name" value="ACETATE KINASE"/>
    <property type="match status" value="1"/>
</dbReference>
<dbReference type="Pfam" id="PF00871">
    <property type="entry name" value="Acetate_kinase"/>
    <property type="match status" value="1"/>
</dbReference>
<dbReference type="PIRSF" id="PIRSF000722">
    <property type="entry name" value="Acetate_prop_kin"/>
    <property type="match status" value="1"/>
</dbReference>
<dbReference type="PRINTS" id="PR00471">
    <property type="entry name" value="ACETATEKNASE"/>
</dbReference>
<dbReference type="SUPFAM" id="SSF53067">
    <property type="entry name" value="Actin-like ATPase domain"/>
    <property type="match status" value="2"/>
</dbReference>
<dbReference type="PROSITE" id="PS01075">
    <property type="entry name" value="ACETATE_KINASE_1"/>
    <property type="match status" value="1"/>
</dbReference>
<dbReference type="PROSITE" id="PS01076">
    <property type="entry name" value="ACETATE_KINASE_2"/>
    <property type="match status" value="1"/>
</dbReference>
<comment type="function">
    <text evidence="1">Catalyzes the formation of acetyl phosphate from acetate and ATP. Can also catalyze the reverse reaction.</text>
</comment>
<comment type="catalytic activity">
    <reaction evidence="1">
        <text>acetate + ATP = acetyl phosphate + ADP</text>
        <dbReference type="Rhea" id="RHEA:11352"/>
        <dbReference type="ChEBI" id="CHEBI:22191"/>
        <dbReference type="ChEBI" id="CHEBI:30089"/>
        <dbReference type="ChEBI" id="CHEBI:30616"/>
        <dbReference type="ChEBI" id="CHEBI:456216"/>
        <dbReference type="EC" id="2.7.2.1"/>
    </reaction>
</comment>
<comment type="cofactor">
    <cofactor evidence="1">
        <name>Mg(2+)</name>
        <dbReference type="ChEBI" id="CHEBI:18420"/>
    </cofactor>
    <cofactor evidence="1">
        <name>Mn(2+)</name>
        <dbReference type="ChEBI" id="CHEBI:29035"/>
    </cofactor>
    <text evidence="1">Mg(2+). Can also accept Mn(2+).</text>
</comment>
<comment type="pathway">
    <text evidence="1">Metabolic intermediate biosynthesis; acetyl-CoA biosynthesis; acetyl-CoA from acetate: step 1/2.</text>
</comment>
<comment type="subunit">
    <text evidence="1">Homodimer.</text>
</comment>
<comment type="subcellular location">
    <subcellularLocation>
        <location evidence="1">Cytoplasm</location>
    </subcellularLocation>
</comment>
<comment type="similarity">
    <text evidence="1">Belongs to the acetokinase family.</text>
</comment>